<keyword id="KW-0903">Direct protein sequencing</keyword>
<keyword id="KW-1015">Disulfide bond</keyword>
<keyword id="KW-0256">Endoplasmic reticulum</keyword>
<keyword id="KW-0325">Glycoprotein</keyword>
<keyword id="KW-0378">Hydrolase</keyword>
<keyword id="KW-0645">Protease</keyword>
<keyword id="KW-0732">Signal</keyword>
<keyword id="KW-0788">Thiol protease</keyword>
<keyword id="KW-0926">Vacuole</keyword>
<keyword id="KW-0865">Zymogen</keyword>
<name>CYSEP_VIGMU</name>
<comment type="function">
    <text>Thought to be involved in the hydrolysis of stored seed proteins. In vitro, catalyzes the hydrolysis of proteins, such as azocasein. Shows a preferential cleavage for Asn-|-Xaa in small molecule substrates such as Boc-Asn-|-OPHNO(2).</text>
</comment>
<comment type="subcellular location">
    <subcellularLocation>
        <location evidence="10 11">Endoplasmic reticulum lumen</location>
    </subcellularLocation>
    <subcellularLocation>
        <location evidence="11">Vacuole</location>
        <location evidence="11">Aleurone grain</location>
    </subcellularLocation>
</comment>
<comment type="PTM">
    <text>The mature protein is not glycosylated.</text>
</comment>
<comment type="PTM">
    <text>The precursor stored in the endoplasmic reticulum lumen is processed during the transport to proteins bodies to two dominant mature forms that differ by a single amino acid residue at the N-terminus.</text>
</comment>
<comment type="similarity">
    <text evidence="7 8 9">Belongs to the peptidase C1 family.</text>
</comment>
<protein>
    <recommendedName>
        <fullName>Vignain</fullName>
        <ecNumber evidence="3">3.4.22.-</ecNumber>
    </recommendedName>
    <alternativeName>
        <fullName>Bean endopeptidase</fullName>
    </alternativeName>
    <alternativeName>
        <fullName>Cysteine proteinase</fullName>
    </alternativeName>
    <alternativeName>
        <fullName>Sulfhydryl-endopeptidase</fullName>
        <shortName>SH-EP</shortName>
    </alternativeName>
    <component>
        <recommendedName>
            <fullName>Vignain-1</fullName>
        </recommendedName>
    </component>
    <component>
        <recommendedName>
            <fullName>Vignain-2</fullName>
        </recommendedName>
    </component>
</protein>
<evidence type="ECO:0000250" key="1">
    <source>
        <dbReference type="UniProtKB" id="P07858"/>
    </source>
</evidence>
<evidence type="ECO:0000250" key="2">
    <source>
        <dbReference type="UniProtKB" id="P25250"/>
    </source>
</evidence>
<evidence type="ECO:0000250" key="3">
    <source>
        <dbReference type="UniProtKB" id="P80884"/>
    </source>
</evidence>
<evidence type="ECO:0000250" key="4">
    <source>
        <dbReference type="UniProtKB" id="V5LU01"/>
    </source>
</evidence>
<evidence type="ECO:0000255" key="5"/>
<evidence type="ECO:0000255" key="6">
    <source>
        <dbReference type="PROSITE-ProRule" id="PRU00498"/>
    </source>
</evidence>
<evidence type="ECO:0000255" key="7">
    <source>
        <dbReference type="PROSITE-ProRule" id="PRU10088"/>
    </source>
</evidence>
<evidence type="ECO:0000255" key="8">
    <source>
        <dbReference type="PROSITE-ProRule" id="PRU10089"/>
    </source>
</evidence>
<evidence type="ECO:0000255" key="9">
    <source>
        <dbReference type="PROSITE-ProRule" id="PRU10090"/>
    </source>
</evidence>
<evidence type="ECO:0000255" key="10">
    <source>
        <dbReference type="PROSITE-ProRule" id="PRU10138"/>
    </source>
</evidence>
<evidence type="ECO:0000269" key="11">
    <source>
    </source>
</evidence>
<reference key="1">
    <citation type="journal article" date="1989" name="Nucleic Acids Res.">
        <title>Nucleotide sequence of cDNA for sulfhydryl-endopeptidase (SH-EP) from cotyledons of germinating Vigna mungo seeds.</title>
        <authorList>
            <person name="Akasofu H."/>
            <person name="Yamauchi D."/>
            <person name="Mitsuhashi W."/>
            <person name="Minamikawa T."/>
        </authorList>
    </citation>
    <scope>NUCLEOTIDE SEQUENCE [MRNA]</scope>
    <scope>PROTEIN SEQUENCE OF 132-140</scope>
    <source>
        <tissue>Seed cotyledon</tissue>
    </source>
</reference>
<reference key="2">
    <citation type="journal article" date="1990" name="Nucleic Acids Res.">
        <title>Nucleotide sequence of the gene for the Vigna mungo sulfhydryl-endopeptidase (SH-EP).</title>
        <authorList>
            <person name="Akasofu H."/>
            <person name="Yamauchi D."/>
            <person name="Minamikawa T."/>
        </authorList>
    </citation>
    <scope>NUCLEOTIDE SEQUENCE [GENOMIC DNA]</scope>
    <source>
        <tissue>Leaf</tissue>
    </source>
</reference>
<reference key="3">
    <citation type="journal article" date="1994" name="FEBS Lett.">
        <title>Posttranslational processing of a carboxy-terminal propeptide containing a KDEL sequence of plant vacuolar cysteine endopeptidase (SH-EP).</title>
        <authorList>
            <person name="Okamoto T."/>
            <person name="Nakayama H."/>
            <person name="Seta K."/>
            <person name="Isobe T."/>
            <person name="Minamikawa T."/>
        </authorList>
    </citation>
    <scope>PROTEIN SEQUENCE OF 127-140; 197-216; 324-333 AND 339-352</scope>
    <scope>SUBCELLULAR LOCATION</scope>
</reference>
<reference key="4">
    <citation type="journal article" date="1994" name="FEBS Lett.">
        <authorList>
            <person name="Okamoto T."/>
            <person name="Nakayama H."/>
            <person name="Seta K."/>
            <person name="Isobe T."/>
            <person name="Minamikawa T."/>
        </authorList>
    </citation>
    <scope>ERRATUM OF PUBMED:8076688</scope>
</reference>
<organism>
    <name type="scientific">Vigna mungo</name>
    <name type="common">Black gram</name>
    <name type="synonym">Phaseolus mungo</name>
    <dbReference type="NCBI Taxonomy" id="3915"/>
    <lineage>
        <taxon>Eukaryota</taxon>
        <taxon>Viridiplantae</taxon>
        <taxon>Streptophyta</taxon>
        <taxon>Embryophyta</taxon>
        <taxon>Tracheophyta</taxon>
        <taxon>Spermatophyta</taxon>
        <taxon>Magnoliopsida</taxon>
        <taxon>eudicotyledons</taxon>
        <taxon>Gunneridae</taxon>
        <taxon>Pentapetalae</taxon>
        <taxon>rosids</taxon>
        <taxon>fabids</taxon>
        <taxon>Fabales</taxon>
        <taxon>Fabaceae</taxon>
        <taxon>Papilionoideae</taxon>
        <taxon>50 kb inversion clade</taxon>
        <taxon>NPAAA clade</taxon>
        <taxon>indigoferoid/millettioid clade</taxon>
        <taxon>Phaseoleae</taxon>
        <taxon>Vigna</taxon>
    </lineage>
</organism>
<feature type="signal peptide" evidence="5">
    <location>
        <begin position="1"/>
        <end position="20"/>
    </location>
</feature>
<feature type="propeptide" id="PRO_0000026445" description="Activation peptide" evidence="11">
    <location>
        <begin position="21"/>
        <end position="126"/>
    </location>
</feature>
<feature type="chain" id="PRO_0000026446" description="Vignain-1">
    <location>
        <begin position="127"/>
        <end position="352"/>
    </location>
</feature>
<feature type="chain" id="PRO_0000026447" description="Vignain-2">
    <location>
        <begin position="128"/>
        <end position="352"/>
    </location>
</feature>
<feature type="propeptide" id="PRO_0000026448" description="Removed in mature form" evidence="4">
    <location>
        <begin position="353"/>
        <end position="362"/>
    </location>
</feature>
<feature type="short sequence motif" description="Prevents secretion from ER">
    <location>
        <begin position="359"/>
        <end position="362"/>
    </location>
</feature>
<feature type="active site" evidence="7">
    <location>
        <position position="152"/>
    </location>
</feature>
<feature type="active site" evidence="8">
    <location>
        <position position="288"/>
    </location>
</feature>
<feature type="active site" evidence="9">
    <location>
        <position position="309"/>
    </location>
</feature>
<feature type="glycosylation site" description="N-linked (GlcNAc...) asparagine" evidence="6">
    <location>
        <position position="326"/>
    </location>
</feature>
<feature type="glycosylation site" description="N-linked (GlcNAc...) asparagine" evidence="6">
    <location>
        <position position="346"/>
    </location>
</feature>
<feature type="disulfide bond" evidence="1">
    <location>
        <begin position="149"/>
        <end position="191"/>
    </location>
</feature>
<feature type="disulfide bond" evidence="2">
    <location>
        <begin position="183"/>
        <end position="224"/>
    </location>
</feature>
<feature type="disulfide bond" evidence="2">
    <location>
        <begin position="282"/>
        <end position="334"/>
    </location>
</feature>
<accession>P12412</accession>
<proteinExistence type="evidence at protein level"/>
<dbReference type="EC" id="3.4.22.-" evidence="3"/>
<dbReference type="EMBL" id="X15732">
    <property type="protein sequence ID" value="CAA33753.1"/>
    <property type="molecule type" value="mRNA"/>
</dbReference>
<dbReference type="EMBL" id="X51900">
    <property type="protein sequence ID" value="CAA36181.1"/>
    <property type="molecule type" value="Genomic_DNA"/>
</dbReference>
<dbReference type="PIR" id="S12581">
    <property type="entry name" value="S12581"/>
</dbReference>
<dbReference type="SMR" id="P12412"/>
<dbReference type="MEROPS" id="C01.010"/>
<dbReference type="MEROPS" id="I29.003"/>
<dbReference type="BRENDA" id="3.4.22.B1">
    <property type="organism ID" value="4742"/>
</dbReference>
<dbReference type="GO" id="GO:0033095">
    <property type="term" value="C:aleurone grain"/>
    <property type="evidence" value="ECO:0007669"/>
    <property type="project" value="UniProtKB-SubCell"/>
</dbReference>
<dbReference type="GO" id="GO:0005788">
    <property type="term" value="C:endoplasmic reticulum lumen"/>
    <property type="evidence" value="ECO:0007669"/>
    <property type="project" value="UniProtKB-SubCell"/>
</dbReference>
<dbReference type="GO" id="GO:0005773">
    <property type="term" value="C:vacuole"/>
    <property type="evidence" value="ECO:0007669"/>
    <property type="project" value="UniProtKB-KW"/>
</dbReference>
<dbReference type="GO" id="GO:0008234">
    <property type="term" value="F:cysteine-type peptidase activity"/>
    <property type="evidence" value="ECO:0007669"/>
    <property type="project" value="UniProtKB-KW"/>
</dbReference>
<dbReference type="GO" id="GO:0006508">
    <property type="term" value="P:proteolysis"/>
    <property type="evidence" value="ECO:0007669"/>
    <property type="project" value="UniProtKB-KW"/>
</dbReference>
<dbReference type="CDD" id="cd02248">
    <property type="entry name" value="Peptidase_C1A"/>
    <property type="match status" value="1"/>
</dbReference>
<dbReference type="FunFam" id="3.90.70.10:FF:000023">
    <property type="entry name" value="Senescence-specific cysteine protease SAG39"/>
    <property type="match status" value="1"/>
</dbReference>
<dbReference type="Gene3D" id="3.90.70.10">
    <property type="entry name" value="Cysteine proteinases"/>
    <property type="match status" value="1"/>
</dbReference>
<dbReference type="InterPro" id="IPR038765">
    <property type="entry name" value="Papain-like_cys_pep_sf"/>
</dbReference>
<dbReference type="InterPro" id="IPR025661">
    <property type="entry name" value="Pept_asp_AS"/>
</dbReference>
<dbReference type="InterPro" id="IPR000169">
    <property type="entry name" value="Pept_cys_AS"/>
</dbReference>
<dbReference type="InterPro" id="IPR025660">
    <property type="entry name" value="Pept_his_AS"/>
</dbReference>
<dbReference type="InterPro" id="IPR013128">
    <property type="entry name" value="Peptidase_C1A"/>
</dbReference>
<dbReference type="InterPro" id="IPR000668">
    <property type="entry name" value="Peptidase_C1A_C"/>
</dbReference>
<dbReference type="InterPro" id="IPR039417">
    <property type="entry name" value="Peptidase_C1A_papain-like"/>
</dbReference>
<dbReference type="InterPro" id="IPR013201">
    <property type="entry name" value="Prot_inhib_I29"/>
</dbReference>
<dbReference type="PANTHER" id="PTHR12411">
    <property type="entry name" value="CYSTEINE PROTEASE FAMILY C1-RELATED"/>
    <property type="match status" value="1"/>
</dbReference>
<dbReference type="Pfam" id="PF08246">
    <property type="entry name" value="Inhibitor_I29"/>
    <property type="match status" value="1"/>
</dbReference>
<dbReference type="Pfam" id="PF00112">
    <property type="entry name" value="Peptidase_C1"/>
    <property type="match status" value="1"/>
</dbReference>
<dbReference type="PRINTS" id="PR00705">
    <property type="entry name" value="PAPAIN"/>
</dbReference>
<dbReference type="SMART" id="SM00848">
    <property type="entry name" value="Inhibitor_I29"/>
    <property type="match status" value="1"/>
</dbReference>
<dbReference type="SMART" id="SM00645">
    <property type="entry name" value="Pept_C1"/>
    <property type="match status" value="1"/>
</dbReference>
<dbReference type="SUPFAM" id="SSF54001">
    <property type="entry name" value="Cysteine proteinases"/>
    <property type="match status" value="1"/>
</dbReference>
<dbReference type="PROSITE" id="PS00014">
    <property type="entry name" value="ER_TARGET"/>
    <property type="match status" value="1"/>
</dbReference>
<dbReference type="PROSITE" id="PS00640">
    <property type="entry name" value="THIOL_PROTEASE_ASN"/>
    <property type="match status" value="1"/>
</dbReference>
<dbReference type="PROSITE" id="PS00139">
    <property type="entry name" value="THIOL_PROTEASE_CYS"/>
    <property type="match status" value="1"/>
</dbReference>
<dbReference type="PROSITE" id="PS00639">
    <property type="entry name" value="THIOL_PROTEASE_HIS"/>
    <property type="match status" value="1"/>
</dbReference>
<sequence>MAMKKLLWVVLSLSLVLGVANSFDFHEKDLESEESLWDLYERWRSHHTVSRSLGEKHKRFNVFKANVMHVHNTNKMDKPYKLKLNKFADMTNHEFRSTYAGSKVNHHKMFRGSQHGSGTFMYEKVGSVPASVDWRKKGAVTDVKDQGQCGSCWAFSTIVAVEGINQIKTNKLVSLSEQELVDCDKEENQGCNGGLMESAFEFIKQKGGITTESNYPYTAQEGTCDESKVNDLAVSIDGHENVPVNDENALLKAVANQPVSVAIDAGGSDFQFYSEGVFTGDCNTDLNHGVAIVGYGTTVDGTNYWIVRNSWGPEWGEQGYIRMQRNISKKEGLCGIAMMASYPIKNSSDNPTGSLSSPKDEL</sequence>